<sequence length="270" mass="28132">MTSGAPDLLIDAGNSRIKWALVTADGSQIAAGALPHSGADQPDWSDLPTPCRAWLSNVAGENVAARIAASLDARWPQLPLTTIRACAQQCGVTNSYTTPQALGSDRWAGMIGAHAAFLGEHLLIATFGTATTLEALRADGCFVGGLIAPGWSLMMRSLGEHTAQLPTLDAHAARGLLDGSIAAAGRSGPFFATDTPRSLSAGCTLAQAGLVERMWRDLQDEWQVPVRLVVSGGAVDEVASALKVPHTRHDSLVLSGLALIAAERALERGN</sequence>
<feature type="chain" id="PRO_1000140230" description="Type III pantothenate kinase">
    <location>
        <begin position="1"/>
        <end position="270"/>
    </location>
</feature>
<feature type="active site" description="Proton acceptor" evidence="1">
    <location>
        <position position="105"/>
    </location>
</feature>
<feature type="binding site" evidence="1">
    <location>
        <begin position="11"/>
        <end position="18"/>
    </location>
    <ligand>
        <name>ATP</name>
        <dbReference type="ChEBI" id="CHEBI:30616"/>
    </ligand>
</feature>
<feature type="binding site" evidence="1">
    <location>
        <position position="96"/>
    </location>
    <ligand>
        <name>substrate</name>
    </ligand>
</feature>
<feature type="binding site" evidence="1">
    <location>
        <begin position="103"/>
        <end position="106"/>
    </location>
    <ligand>
        <name>substrate</name>
    </ligand>
</feature>
<feature type="binding site" evidence="1">
    <location>
        <position position="129"/>
    </location>
    <ligand>
        <name>ATP</name>
        <dbReference type="ChEBI" id="CHEBI:30616"/>
    </ligand>
</feature>
<feature type="binding site" evidence="1">
    <location>
        <position position="195"/>
    </location>
    <ligand>
        <name>substrate</name>
    </ligand>
</feature>
<name>COAX_PARPJ</name>
<reference key="1">
    <citation type="journal article" date="2011" name="J. Bacteriol.">
        <title>Complete genome sequence of the plant growth-promoting endophyte Burkholderia phytofirmans strain PsJN.</title>
        <authorList>
            <person name="Weilharter A."/>
            <person name="Mitter B."/>
            <person name="Shin M.V."/>
            <person name="Chain P.S."/>
            <person name="Nowak J."/>
            <person name="Sessitsch A."/>
        </authorList>
    </citation>
    <scope>NUCLEOTIDE SEQUENCE [LARGE SCALE GENOMIC DNA]</scope>
    <source>
        <strain>DSM 17436 / LMG 22146 / PsJN</strain>
    </source>
</reference>
<gene>
    <name evidence="1" type="primary">coaX</name>
    <name type="ordered locus">Bphyt_0489</name>
</gene>
<protein>
    <recommendedName>
        <fullName evidence="1">Type III pantothenate kinase</fullName>
        <ecNumber evidence="1">2.7.1.33</ecNumber>
    </recommendedName>
    <alternativeName>
        <fullName evidence="1">PanK-III</fullName>
    </alternativeName>
    <alternativeName>
        <fullName evidence="1">Pantothenic acid kinase</fullName>
    </alternativeName>
</protein>
<comment type="function">
    <text evidence="1">Catalyzes the phosphorylation of pantothenate (Pan), the first step in CoA biosynthesis.</text>
</comment>
<comment type="catalytic activity">
    <reaction evidence="1">
        <text>(R)-pantothenate + ATP = (R)-4'-phosphopantothenate + ADP + H(+)</text>
        <dbReference type="Rhea" id="RHEA:16373"/>
        <dbReference type="ChEBI" id="CHEBI:10986"/>
        <dbReference type="ChEBI" id="CHEBI:15378"/>
        <dbReference type="ChEBI" id="CHEBI:29032"/>
        <dbReference type="ChEBI" id="CHEBI:30616"/>
        <dbReference type="ChEBI" id="CHEBI:456216"/>
        <dbReference type="EC" id="2.7.1.33"/>
    </reaction>
</comment>
<comment type="cofactor">
    <cofactor evidence="1">
        <name>NH4(+)</name>
        <dbReference type="ChEBI" id="CHEBI:28938"/>
    </cofactor>
    <cofactor evidence="1">
        <name>K(+)</name>
        <dbReference type="ChEBI" id="CHEBI:29103"/>
    </cofactor>
    <text evidence="1">A monovalent cation. Ammonium or potassium.</text>
</comment>
<comment type="pathway">
    <text evidence="1">Cofactor biosynthesis; coenzyme A biosynthesis; CoA from (R)-pantothenate: step 1/5.</text>
</comment>
<comment type="subunit">
    <text evidence="1">Homodimer.</text>
</comment>
<comment type="subcellular location">
    <subcellularLocation>
        <location evidence="1">Cytoplasm</location>
    </subcellularLocation>
</comment>
<comment type="similarity">
    <text evidence="1">Belongs to the type III pantothenate kinase family.</text>
</comment>
<dbReference type="EC" id="2.7.1.33" evidence="1"/>
<dbReference type="EMBL" id="CP001052">
    <property type="protein sequence ID" value="ACD14914.1"/>
    <property type="molecule type" value="Genomic_DNA"/>
</dbReference>
<dbReference type="RefSeq" id="WP_012431556.1">
    <property type="nucleotide sequence ID" value="NC_010681.1"/>
</dbReference>
<dbReference type="SMR" id="B2SWX0"/>
<dbReference type="STRING" id="398527.Bphyt_0489"/>
<dbReference type="KEGG" id="bpy:Bphyt_0489"/>
<dbReference type="eggNOG" id="COG1521">
    <property type="taxonomic scope" value="Bacteria"/>
</dbReference>
<dbReference type="HOGENOM" id="CLU_066627_0_0_4"/>
<dbReference type="OrthoDB" id="9781305at2"/>
<dbReference type="UniPathway" id="UPA00241">
    <property type="reaction ID" value="UER00352"/>
</dbReference>
<dbReference type="Proteomes" id="UP000001739">
    <property type="component" value="Chromosome 1"/>
</dbReference>
<dbReference type="GO" id="GO:0005737">
    <property type="term" value="C:cytoplasm"/>
    <property type="evidence" value="ECO:0007669"/>
    <property type="project" value="UniProtKB-SubCell"/>
</dbReference>
<dbReference type="GO" id="GO:0005524">
    <property type="term" value="F:ATP binding"/>
    <property type="evidence" value="ECO:0007669"/>
    <property type="project" value="UniProtKB-UniRule"/>
</dbReference>
<dbReference type="GO" id="GO:0004594">
    <property type="term" value="F:pantothenate kinase activity"/>
    <property type="evidence" value="ECO:0007669"/>
    <property type="project" value="UniProtKB-UniRule"/>
</dbReference>
<dbReference type="GO" id="GO:0015937">
    <property type="term" value="P:coenzyme A biosynthetic process"/>
    <property type="evidence" value="ECO:0007669"/>
    <property type="project" value="UniProtKB-UniRule"/>
</dbReference>
<dbReference type="CDD" id="cd24015">
    <property type="entry name" value="ASKHA_NBD_PanK-III"/>
    <property type="match status" value="1"/>
</dbReference>
<dbReference type="Gene3D" id="3.30.420.40">
    <property type="match status" value="2"/>
</dbReference>
<dbReference type="HAMAP" id="MF_01274">
    <property type="entry name" value="Pantothen_kinase_3"/>
    <property type="match status" value="1"/>
</dbReference>
<dbReference type="InterPro" id="IPR043129">
    <property type="entry name" value="ATPase_NBD"/>
</dbReference>
<dbReference type="InterPro" id="IPR004619">
    <property type="entry name" value="Type_III_PanK"/>
</dbReference>
<dbReference type="NCBIfam" id="TIGR00671">
    <property type="entry name" value="baf"/>
    <property type="match status" value="1"/>
</dbReference>
<dbReference type="NCBIfam" id="NF009868">
    <property type="entry name" value="PRK13328.1-4"/>
    <property type="match status" value="1"/>
</dbReference>
<dbReference type="PANTHER" id="PTHR34265">
    <property type="entry name" value="TYPE III PANTOTHENATE KINASE"/>
    <property type="match status" value="1"/>
</dbReference>
<dbReference type="PANTHER" id="PTHR34265:SF1">
    <property type="entry name" value="TYPE III PANTOTHENATE KINASE"/>
    <property type="match status" value="1"/>
</dbReference>
<dbReference type="Pfam" id="PF03309">
    <property type="entry name" value="Pan_kinase"/>
    <property type="match status" value="1"/>
</dbReference>
<dbReference type="SUPFAM" id="SSF53067">
    <property type="entry name" value="Actin-like ATPase domain"/>
    <property type="match status" value="2"/>
</dbReference>
<evidence type="ECO:0000255" key="1">
    <source>
        <dbReference type="HAMAP-Rule" id="MF_01274"/>
    </source>
</evidence>
<keyword id="KW-0067">ATP-binding</keyword>
<keyword id="KW-0173">Coenzyme A biosynthesis</keyword>
<keyword id="KW-0963">Cytoplasm</keyword>
<keyword id="KW-0418">Kinase</keyword>
<keyword id="KW-0547">Nucleotide-binding</keyword>
<keyword id="KW-0630">Potassium</keyword>
<keyword id="KW-0808">Transferase</keyword>
<accession>B2SWX0</accession>
<organism>
    <name type="scientific">Paraburkholderia phytofirmans (strain DSM 17436 / LMG 22146 / PsJN)</name>
    <name type="common">Burkholderia phytofirmans</name>
    <dbReference type="NCBI Taxonomy" id="398527"/>
    <lineage>
        <taxon>Bacteria</taxon>
        <taxon>Pseudomonadati</taxon>
        <taxon>Pseudomonadota</taxon>
        <taxon>Betaproteobacteria</taxon>
        <taxon>Burkholderiales</taxon>
        <taxon>Burkholderiaceae</taxon>
        <taxon>Paraburkholderia</taxon>
    </lineage>
</organism>
<proteinExistence type="inferred from homology"/>